<sequence length="211" mass="24052">MRLTAKQVTWLKVSLHLAGLLPFLWLVWAINHGGLGADPVKDIQHFTGRTALKFLLATLLITPLARYAKQPLLIRTRRLLGLWCFAWATLHLTSYALLELGVNNLALLGKELITRPYLTLGIISWVILLALAFTSTQAMQRKLGKHWQQLHNFVYLVAILAPIHYLWSVKIISPQPLIYAGLAVLLLALRYKKLRSLFNRLRKQVHNKLSV</sequence>
<name>MSRQ_ECO24</name>
<dbReference type="EMBL" id="CP000800">
    <property type="protein sequence ID" value="ABV18855.1"/>
    <property type="molecule type" value="Genomic_DNA"/>
</dbReference>
<dbReference type="RefSeq" id="WP_001240105.1">
    <property type="nucleotide sequence ID" value="NC_009801.1"/>
</dbReference>
<dbReference type="SMR" id="A7ZN93"/>
<dbReference type="GeneID" id="75205790"/>
<dbReference type="KEGG" id="ecw:EcE24377A_2203"/>
<dbReference type="HOGENOM" id="CLU_080662_1_0_6"/>
<dbReference type="Proteomes" id="UP000001122">
    <property type="component" value="Chromosome"/>
</dbReference>
<dbReference type="GO" id="GO:0005886">
    <property type="term" value="C:plasma membrane"/>
    <property type="evidence" value="ECO:0007669"/>
    <property type="project" value="UniProtKB-SubCell"/>
</dbReference>
<dbReference type="GO" id="GO:0009055">
    <property type="term" value="F:electron transfer activity"/>
    <property type="evidence" value="ECO:0007669"/>
    <property type="project" value="UniProtKB-UniRule"/>
</dbReference>
<dbReference type="GO" id="GO:0010181">
    <property type="term" value="F:FMN binding"/>
    <property type="evidence" value="ECO:0007669"/>
    <property type="project" value="UniProtKB-UniRule"/>
</dbReference>
<dbReference type="GO" id="GO:0020037">
    <property type="term" value="F:heme binding"/>
    <property type="evidence" value="ECO:0007669"/>
    <property type="project" value="UniProtKB-UniRule"/>
</dbReference>
<dbReference type="GO" id="GO:0046872">
    <property type="term" value="F:metal ion binding"/>
    <property type="evidence" value="ECO:0007669"/>
    <property type="project" value="UniProtKB-KW"/>
</dbReference>
<dbReference type="GO" id="GO:0016679">
    <property type="term" value="F:oxidoreductase activity, acting on diphenols and related substances as donors"/>
    <property type="evidence" value="ECO:0007669"/>
    <property type="project" value="TreeGrafter"/>
</dbReference>
<dbReference type="GO" id="GO:0030091">
    <property type="term" value="P:protein repair"/>
    <property type="evidence" value="ECO:0007669"/>
    <property type="project" value="UniProtKB-UniRule"/>
</dbReference>
<dbReference type="HAMAP" id="MF_01207">
    <property type="entry name" value="MsrQ"/>
    <property type="match status" value="1"/>
</dbReference>
<dbReference type="InterPro" id="IPR013130">
    <property type="entry name" value="Fe3_Rdtase_TM_dom"/>
</dbReference>
<dbReference type="InterPro" id="IPR022837">
    <property type="entry name" value="MsrQ-like"/>
</dbReference>
<dbReference type="NCBIfam" id="NF003830">
    <property type="entry name" value="PRK05419.1-1"/>
    <property type="match status" value="1"/>
</dbReference>
<dbReference type="NCBIfam" id="NF003831">
    <property type="entry name" value="PRK05419.1-2"/>
    <property type="match status" value="1"/>
</dbReference>
<dbReference type="NCBIfam" id="NF003832">
    <property type="entry name" value="PRK05419.1-4"/>
    <property type="match status" value="1"/>
</dbReference>
<dbReference type="PANTHER" id="PTHR36964">
    <property type="entry name" value="PROTEIN-METHIONINE-SULFOXIDE REDUCTASE HEME-BINDING SUBUNIT MSRQ"/>
    <property type="match status" value="1"/>
</dbReference>
<dbReference type="PANTHER" id="PTHR36964:SF1">
    <property type="entry name" value="PROTEIN-METHIONINE-SULFOXIDE REDUCTASE HEME-BINDING SUBUNIT MSRQ"/>
    <property type="match status" value="1"/>
</dbReference>
<dbReference type="Pfam" id="PF01794">
    <property type="entry name" value="Ferric_reduct"/>
    <property type="match status" value="1"/>
</dbReference>
<keyword id="KW-0997">Cell inner membrane</keyword>
<keyword id="KW-1003">Cell membrane</keyword>
<keyword id="KW-0249">Electron transport</keyword>
<keyword id="KW-0285">Flavoprotein</keyword>
<keyword id="KW-0288">FMN</keyword>
<keyword id="KW-0349">Heme</keyword>
<keyword id="KW-0408">Iron</keyword>
<keyword id="KW-0472">Membrane</keyword>
<keyword id="KW-0479">Metal-binding</keyword>
<keyword id="KW-1185">Reference proteome</keyword>
<keyword id="KW-0812">Transmembrane</keyword>
<keyword id="KW-1133">Transmembrane helix</keyword>
<keyword id="KW-0813">Transport</keyword>
<reference key="1">
    <citation type="journal article" date="2008" name="J. Bacteriol.">
        <title>The pangenome structure of Escherichia coli: comparative genomic analysis of E. coli commensal and pathogenic isolates.</title>
        <authorList>
            <person name="Rasko D.A."/>
            <person name="Rosovitz M.J."/>
            <person name="Myers G.S.A."/>
            <person name="Mongodin E.F."/>
            <person name="Fricke W.F."/>
            <person name="Gajer P."/>
            <person name="Crabtree J."/>
            <person name="Sebaihia M."/>
            <person name="Thomson N.R."/>
            <person name="Chaudhuri R."/>
            <person name="Henderson I.R."/>
            <person name="Sperandio V."/>
            <person name="Ravel J."/>
        </authorList>
    </citation>
    <scope>NUCLEOTIDE SEQUENCE [LARGE SCALE GENOMIC DNA]</scope>
    <source>
        <strain>E24377A / ETEC</strain>
    </source>
</reference>
<protein>
    <recommendedName>
        <fullName evidence="1">Protein-methionine-sulfoxide reductase heme-binding subunit MsrQ</fullName>
    </recommendedName>
    <alternativeName>
        <fullName evidence="1">Flavocytochrome MsrQ</fullName>
    </alternativeName>
</protein>
<accession>A7ZN93</accession>
<evidence type="ECO:0000255" key="1">
    <source>
        <dbReference type="HAMAP-Rule" id="MF_01207"/>
    </source>
</evidence>
<gene>
    <name evidence="1" type="primary">msrQ</name>
    <name type="ordered locus">EcE24377A_2203</name>
</gene>
<feature type="chain" id="PRO_1000085526" description="Protein-methionine-sulfoxide reductase heme-binding subunit MsrQ">
    <location>
        <begin position="1"/>
        <end position="211"/>
    </location>
</feature>
<feature type="transmembrane region" description="Helical" evidence="1">
    <location>
        <begin position="17"/>
        <end position="37"/>
    </location>
</feature>
<feature type="transmembrane region" description="Helical" evidence="1">
    <location>
        <begin position="82"/>
        <end position="102"/>
    </location>
</feature>
<feature type="transmembrane region" description="Helical" evidence="1">
    <location>
        <begin position="116"/>
        <end position="136"/>
    </location>
</feature>
<feature type="transmembrane region" description="Helical" evidence="1">
    <location>
        <begin position="153"/>
        <end position="173"/>
    </location>
</feature>
<organism>
    <name type="scientific">Escherichia coli O139:H28 (strain E24377A / ETEC)</name>
    <dbReference type="NCBI Taxonomy" id="331111"/>
    <lineage>
        <taxon>Bacteria</taxon>
        <taxon>Pseudomonadati</taxon>
        <taxon>Pseudomonadota</taxon>
        <taxon>Gammaproteobacteria</taxon>
        <taxon>Enterobacterales</taxon>
        <taxon>Enterobacteriaceae</taxon>
        <taxon>Escherichia</taxon>
    </lineage>
</organism>
<comment type="function">
    <text evidence="1">Part of the MsrPQ system that repairs oxidized periplasmic proteins containing methionine sulfoxide residues (Met-O), using respiratory chain electrons. Thus protects these proteins from oxidative-stress damage caused by reactive species of oxygen and chlorine generated by the host defense mechanisms. MsrPQ is essential for the maintenance of envelope integrity under bleach stress, rescuing a wide series of structurally unrelated periplasmic proteins from methionine oxidation, including the primary periplasmic chaperone SurA and the lipoprotein Pal. MsrQ provides electrons for reduction to the reductase catalytic subunit MsrP, using the quinone pool of the respiratory chain.</text>
</comment>
<comment type="cofactor">
    <cofactor evidence="1">
        <name>FMN</name>
        <dbReference type="ChEBI" id="CHEBI:58210"/>
    </cofactor>
    <text evidence="1">Binds 1 FMN per subunit.</text>
</comment>
<comment type="cofactor">
    <cofactor evidence="1">
        <name>heme b</name>
        <dbReference type="ChEBI" id="CHEBI:60344"/>
    </cofactor>
    <text evidence="1">Binds 1 heme b (iron(II)-protoporphyrin IX) group per subunit.</text>
</comment>
<comment type="subunit">
    <text evidence="1">Heterodimer of a catalytic subunit (MsrP) and a heme-binding subunit (MsrQ).</text>
</comment>
<comment type="subcellular location">
    <subcellularLocation>
        <location evidence="1">Cell inner membrane</location>
        <topology evidence="1">Multi-pass membrane protein</topology>
    </subcellularLocation>
</comment>
<comment type="similarity">
    <text evidence="1">Belongs to the MsrQ family.</text>
</comment>
<proteinExistence type="inferred from homology"/>